<comment type="function">
    <text evidence="1">Catalyzes the formation of phosphatidylethanolamine (PtdEtn) from phosphatidylserine (PtdSer).</text>
</comment>
<comment type="catalytic activity">
    <reaction evidence="1">
        <text>a 1,2-diacyl-sn-glycero-3-phospho-L-serine + H(+) = a 1,2-diacyl-sn-glycero-3-phosphoethanolamine + CO2</text>
        <dbReference type="Rhea" id="RHEA:20828"/>
        <dbReference type="ChEBI" id="CHEBI:15378"/>
        <dbReference type="ChEBI" id="CHEBI:16526"/>
        <dbReference type="ChEBI" id="CHEBI:57262"/>
        <dbReference type="ChEBI" id="CHEBI:64612"/>
        <dbReference type="EC" id="4.1.1.65"/>
    </reaction>
</comment>
<comment type="cofactor">
    <cofactor evidence="1">
        <name>pyruvate</name>
        <dbReference type="ChEBI" id="CHEBI:15361"/>
    </cofactor>
    <text evidence="1">Binds 1 pyruvoyl group covalently per subunit.</text>
</comment>
<comment type="pathway">
    <text evidence="1">Phospholipid metabolism; phosphatidylethanolamine biosynthesis; phosphatidylethanolamine from CDP-diacylglycerol: step 2/2.</text>
</comment>
<comment type="subunit">
    <text evidence="1">Heterodimer of a large membrane-associated beta subunit and a small pyruvoyl-containing alpha subunit.</text>
</comment>
<comment type="subcellular location">
    <subcellularLocation>
        <location evidence="1">Cell membrane</location>
        <topology evidence="1">Peripheral membrane protein</topology>
    </subcellularLocation>
</comment>
<comment type="PTM">
    <text evidence="1">Is synthesized initially as an inactive proenzyme. Formation of the active enzyme involves a self-maturation process in which the active site pyruvoyl group is generated from an internal serine residue via an autocatalytic post-translational modification. Two non-identical subunits are generated from the proenzyme in this reaction, and the pyruvate is formed at the N-terminus of the alpha chain, which is derived from the carboxyl end of the proenzyme. The autoendoproteolytic cleavage occurs by a canonical serine protease mechanism, in which the side chain hydroxyl group of the serine supplies its oxygen atom to form the C-terminus of the beta chain, while the remainder of the serine residue undergoes an oxidative deamination to produce ammonia and the pyruvoyl prosthetic group on the alpha chain. During this reaction, the Ser that is part of the protease active site of the proenzyme becomes the pyruvoyl prosthetic group, which constitutes an essential element of the active site of the mature decarboxylase.</text>
</comment>
<comment type="similarity">
    <text evidence="1">Belongs to the phosphatidylserine decarboxylase family. PSD-B subfamily. Prokaryotic type I sub-subfamily.</text>
</comment>
<gene>
    <name evidence="1" type="primary">psd</name>
    <name type="ordered locus">ETA_29750</name>
</gene>
<sequence>MLDRIKLGLNHILPKKALTELAGWGAGKRGGRLTKAVIDAFVWYYKVDMKEAQKPDTASYRTFNDFFVRPLRDEARPIETDPNQLVLPADGAISQLGPIEGDQIFQAKGHTYSLEALLAGNAAMTDMFRDGEFVTTYLAPRDYHRVHMPCNGILREMIYVPGDLYSVNPLTAQNIPNLFARNERVICRFDTEFGPMVQILVGATIVGSIETVWSGTVTPPREGVIKRWSWPGADEEGAVVLLKGQEMGRFKLGSTVINLFAPGKVKLAESLTAGSQTRLGATLATALQKESAEDVLHHP</sequence>
<accession>B2VCV2</accession>
<keyword id="KW-1003">Cell membrane</keyword>
<keyword id="KW-0210">Decarboxylase</keyword>
<keyword id="KW-0444">Lipid biosynthesis</keyword>
<keyword id="KW-0443">Lipid metabolism</keyword>
<keyword id="KW-0456">Lyase</keyword>
<keyword id="KW-0472">Membrane</keyword>
<keyword id="KW-0594">Phospholipid biosynthesis</keyword>
<keyword id="KW-1208">Phospholipid metabolism</keyword>
<keyword id="KW-0670">Pyruvate</keyword>
<keyword id="KW-1185">Reference proteome</keyword>
<keyword id="KW-0865">Zymogen</keyword>
<dbReference type="EC" id="4.1.1.65" evidence="1"/>
<dbReference type="EMBL" id="CU468135">
    <property type="protein sequence ID" value="CAO98021.1"/>
    <property type="molecule type" value="Genomic_DNA"/>
</dbReference>
<dbReference type="RefSeq" id="WP_012442673.1">
    <property type="nucleotide sequence ID" value="NC_010694.1"/>
</dbReference>
<dbReference type="SMR" id="B2VCV2"/>
<dbReference type="STRING" id="465817.ETA_29750"/>
<dbReference type="KEGG" id="eta:ETA_29750"/>
<dbReference type="eggNOG" id="COG0688">
    <property type="taxonomic scope" value="Bacteria"/>
</dbReference>
<dbReference type="HOGENOM" id="CLU_029061_4_1_6"/>
<dbReference type="OrthoDB" id="9802030at2"/>
<dbReference type="UniPathway" id="UPA00558">
    <property type="reaction ID" value="UER00616"/>
</dbReference>
<dbReference type="Proteomes" id="UP000001726">
    <property type="component" value="Chromosome"/>
</dbReference>
<dbReference type="GO" id="GO:0005886">
    <property type="term" value="C:plasma membrane"/>
    <property type="evidence" value="ECO:0007669"/>
    <property type="project" value="UniProtKB-SubCell"/>
</dbReference>
<dbReference type="GO" id="GO:0004609">
    <property type="term" value="F:phosphatidylserine decarboxylase activity"/>
    <property type="evidence" value="ECO:0007669"/>
    <property type="project" value="UniProtKB-UniRule"/>
</dbReference>
<dbReference type="GO" id="GO:0006646">
    <property type="term" value="P:phosphatidylethanolamine biosynthetic process"/>
    <property type="evidence" value="ECO:0007669"/>
    <property type="project" value="UniProtKB-UniRule"/>
</dbReference>
<dbReference type="HAMAP" id="MF_00662">
    <property type="entry name" value="PS_decarb_PSD_B_type1"/>
    <property type="match status" value="1"/>
</dbReference>
<dbReference type="InterPro" id="IPR003817">
    <property type="entry name" value="PS_Dcarbxylase"/>
</dbReference>
<dbReference type="InterPro" id="IPR033177">
    <property type="entry name" value="PSD-B"/>
</dbReference>
<dbReference type="InterPro" id="IPR033178">
    <property type="entry name" value="PSD_type1_pro"/>
</dbReference>
<dbReference type="NCBIfam" id="TIGR00163">
    <property type="entry name" value="PS_decarb"/>
    <property type="match status" value="1"/>
</dbReference>
<dbReference type="PANTHER" id="PTHR10067">
    <property type="entry name" value="PHOSPHATIDYLSERINE DECARBOXYLASE"/>
    <property type="match status" value="1"/>
</dbReference>
<dbReference type="PANTHER" id="PTHR10067:SF6">
    <property type="entry name" value="PHOSPHATIDYLSERINE DECARBOXYLASE PROENZYME, MITOCHONDRIAL"/>
    <property type="match status" value="1"/>
</dbReference>
<dbReference type="Pfam" id="PF02666">
    <property type="entry name" value="PS_Dcarbxylase"/>
    <property type="match status" value="1"/>
</dbReference>
<feature type="chain" id="PRO_1000131374" description="Phosphatidylserine decarboxylase beta chain" evidence="1">
    <location>
        <begin position="1"/>
        <end position="253"/>
    </location>
</feature>
<feature type="chain" id="PRO_1000131375" description="Phosphatidylserine decarboxylase alpha chain" evidence="1">
    <location>
        <begin position="254"/>
        <end position="299"/>
    </location>
</feature>
<feature type="active site" description="Charge relay system; for autoendoproteolytic cleavage activity" evidence="1">
    <location>
        <position position="90"/>
    </location>
</feature>
<feature type="active site" description="Charge relay system; for autoendoproteolytic cleavage activity" evidence="1">
    <location>
        <position position="147"/>
    </location>
</feature>
<feature type="active site" description="Charge relay system; for autoendoproteolytic cleavage activity" evidence="1">
    <location>
        <position position="254"/>
    </location>
</feature>
<feature type="active site" description="Schiff-base intermediate with substrate; via pyruvic acid; for decarboxylase activity" evidence="1">
    <location>
        <position position="254"/>
    </location>
</feature>
<feature type="site" description="Cleavage (non-hydrolytic); by autocatalysis" evidence="1">
    <location>
        <begin position="253"/>
        <end position="254"/>
    </location>
</feature>
<feature type="modified residue" description="Pyruvic acid (Ser); by autocatalysis" evidence="1">
    <location>
        <position position="254"/>
    </location>
</feature>
<protein>
    <recommendedName>
        <fullName evidence="1">Phosphatidylserine decarboxylase proenzyme</fullName>
        <ecNumber evidence="1">4.1.1.65</ecNumber>
    </recommendedName>
    <component>
        <recommendedName>
            <fullName evidence="1">Phosphatidylserine decarboxylase alpha chain</fullName>
        </recommendedName>
    </component>
    <component>
        <recommendedName>
            <fullName evidence="1">Phosphatidylserine decarboxylase beta chain</fullName>
        </recommendedName>
    </component>
</protein>
<evidence type="ECO:0000255" key="1">
    <source>
        <dbReference type="HAMAP-Rule" id="MF_00662"/>
    </source>
</evidence>
<reference key="1">
    <citation type="journal article" date="2008" name="Environ. Microbiol.">
        <title>The genome of Erwinia tasmaniensis strain Et1/99, a non-pathogenic bacterium in the genus Erwinia.</title>
        <authorList>
            <person name="Kube M."/>
            <person name="Migdoll A.M."/>
            <person name="Mueller I."/>
            <person name="Kuhl H."/>
            <person name="Beck A."/>
            <person name="Reinhardt R."/>
            <person name="Geider K."/>
        </authorList>
    </citation>
    <scope>NUCLEOTIDE SEQUENCE [LARGE SCALE GENOMIC DNA]</scope>
    <source>
        <strain>DSM 17950 / CFBP 7177 / CIP 109463 / NCPPB 4357 / Et1/99</strain>
    </source>
</reference>
<name>PSD_ERWT9</name>
<organism>
    <name type="scientific">Erwinia tasmaniensis (strain DSM 17950 / CFBP 7177 / CIP 109463 / NCPPB 4357 / Et1/99)</name>
    <dbReference type="NCBI Taxonomy" id="465817"/>
    <lineage>
        <taxon>Bacteria</taxon>
        <taxon>Pseudomonadati</taxon>
        <taxon>Pseudomonadota</taxon>
        <taxon>Gammaproteobacteria</taxon>
        <taxon>Enterobacterales</taxon>
        <taxon>Erwiniaceae</taxon>
        <taxon>Erwinia</taxon>
    </lineage>
</organism>
<proteinExistence type="inferred from homology"/>